<organism>
    <name type="scientific">Bos taurus</name>
    <name type="common">Bovine</name>
    <dbReference type="NCBI Taxonomy" id="9913"/>
    <lineage>
        <taxon>Eukaryota</taxon>
        <taxon>Metazoa</taxon>
        <taxon>Chordata</taxon>
        <taxon>Craniata</taxon>
        <taxon>Vertebrata</taxon>
        <taxon>Euteleostomi</taxon>
        <taxon>Mammalia</taxon>
        <taxon>Eutheria</taxon>
        <taxon>Laurasiatheria</taxon>
        <taxon>Artiodactyla</taxon>
        <taxon>Ruminantia</taxon>
        <taxon>Pecora</taxon>
        <taxon>Bovidae</taxon>
        <taxon>Bovinae</taxon>
        <taxon>Bos</taxon>
    </lineage>
</organism>
<gene>
    <name type="primary">PSMA4</name>
</gene>
<comment type="function">
    <text evidence="1">Component of the 20S core proteasome complex involved in the proteolytic degradation of most intracellular proteins. This complex plays numerous essential roles within the cell by associating with different regulatory particles. Associated with two 19S regulatory particles, forms the 26S proteasome and thus participates in the ATP-dependent degradation of ubiquitinated proteins. The 26S proteasome plays a key role in the maintenance of protein homeostasis by removing misfolded or damaged proteins that could impair cellular functions, and by removing proteins whose functions are no longer required. Associated with the PA200 or PA28, the 20S proteasome mediates ubiquitin-independent protein degradation. This type of proteolysis is required in several pathways including spermatogenesis (20S-PA200 complex) or generation of a subset of MHC class I-presented antigenic peptides (20S-PA28 complex).</text>
</comment>
<comment type="subunit">
    <text evidence="5">The 26S proteasome consists of a 20S proteasome core and two 19S regulatory subunits. The 20S proteasome core is a barrel-shaped complex made of 28 subunits that are arranged in four stacked rings. The two outer rings are each formed by seven alpha subunits, and the two inner rings are formed by seven beta subunits. The proteolytic activity is exerted by three beta-subunits PSMB5, PSMB6 and PSMB7 (PubMed:12015144).</text>
</comment>
<comment type="subcellular location">
    <subcellularLocation>
        <location evidence="1">Cytoplasm</location>
    </subcellularLocation>
    <subcellularLocation>
        <location evidence="1">Nucleus</location>
    </subcellularLocation>
    <text evidence="1 2">Translocated from the cytoplasm into the nucleus following interaction with AKIRIN2, which bridges the proteasome with the nuclear import receptor IPO9 (By similarity). Colocalizes with TRIM5 in the cytoplasmic bodies (By similarity).</text>
</comment>
<comment type="similarity">
    <text evidence="3">Belongs to the peptidase T1A family.</text>
</comment>
<protein>
    <recommendedName>
        <fullName>Proteasome subunit alpha type-4</fullName>
    </recommendedName>
</protein>
<reference key="1">
    <citation type="submission" date="2005-08" db="EMBL/GenBank/DDBJ databases">
        <authorList>
            <consortium name="NIH - Mammalian Gene Collection (MGC) project"/>
        </authorList>
    </citation>
    <scope>NUCLEOTIDE SEQUENCE [LARGE SCALE MRNA]</scope>
    <source>
        <strain>Crossbred X Angus</strain>
        <tissue>Ileum</tissue>
    </source>
</reference>
<reference key="2">
    <citation type="journal article" date="2002" name="Structure">
        <title>The structure of the mammalian 20S proteasome at 2.75 A resolution.</title>
        <authorList>
            <person name="Unno M."/>
            <person name="Mizushima T."/>
            <person name="Morimoto Y."/>
            <person name="Tomisugi Y."/>
            <person name="Tanaka K."/>
            <person name="Yasuoka N."/>
            <person name="Tsukihara T."/>
        </authorList>
    </citation>
    <scope>X-RAY CRYSTALLOGRAPHY (2.75 ANGSTROMS) OF COMPLEX WITH 20S PROTEASOME</scope>
</reference>
<keyword id="KW-0002">3D-structure</keyword>
<keyword id="KW-0007">Acetylation</keyword>
<keyword id="KW-0963">Cytoplasm</keyword>
<keyword id="KW-0539">Nucleus</keyword>
<keyword id="KW-0597">Phosphoprotein</keyword>
<keyword id="KW-0647">Proteasome</keyword>
<keyword id="KW-1185">Reference proteome</keyword>
<feature type="chain" id="PRO_0000274032" description="Proteasome subunit alpha type-4">
    <location>
        <begin position="1"/>
        <end position="261"/>
    </location>
</feature>
<feature type="region of interest" description="Disordered" evidence="4">
    <location>
        <begin position="240"/>
        <end position="261"/>
    </location>
</feature>
<feature type="modified residue" description="Phosphoserine" evidence="1">
    <location>
        <position position="13"/>
    </location>
</feature>
<feature type="modified residue" description="Phosphoserine" evidence="1">
    <location>
        <position position="75"/>
    </location>
</feature>
<feature type="modified residue" description="N6-acetyllysine" evidence="1">
    <location>
        <position position="127"/>
    </location>
</feature>
<feature type="modified residue" description="Phosphoserine" evidence="1">
    <location>
        <position position="173"/>
    </location>
</feature>
<feature type="modified residue" description="N6-acetyllysine" evidence="1">
    <location>
        <position position="176"/>
    </location>
</feature>
<feature type="helix" evidence="7">
    <location>
        <begin position="2"/>
        <end position="5"/>
    </location>
</feature>
<feature type="helix" evidence="7">
    <location>
        <begin position="19"/>
        <end position="30"/>
    </location>
</feature>
<feature type="strand" evidence="7">
    <location>
        <begin position="34"/>
        <end position="39"/>
    </location>
</feature>
<feature type="strand" evidence="7">
    <location>
        <begin position="42"/>
        <end position="48"/>
    </location>
</feature>
<feature type="strand" evidence="7">
    <location>
        <begin position="63"/>
        <end position="67"/>
    </location>
</feature>
<feature type="strand" evidence="7">
    <location>
        <begin position="69"/>
        <end position="78"/>
    </location>
</feature>
<feature type="helix" evidence="7">
    <location>
        <begin position="80"/>
        <end position="101"/>
    </location>
</feature>
<feature type="helix" evidence="7">
    <location>
        <begin position="107"/>
        <end position="123"/>
    </location>
</feature>
<feature type="strand" evidence="7">
    <location>
        <begin position="124"/>
        <end position="126"/>
    </location>
</feature>
<feature type="strand" evidence="7">
    <location>
        <begin position="132"/>
        <end position="140"/>
    </location>
</feature>
<feature type="turn" evidence="7">
    <location>
        <begin position="141"/>
        <end position="143"/>
    </location>
</feature>
<feature type="strand" evidence="7">
    <location>
        <begin position="144"/>
        <end position="150"/>
    </location>
</feature>
<feature type="turn" evidence="6">
    <location>
        <begin position="152"/>
        <end position="154"/>
    </location>
</feature>
<feature type="strand" evidence="7">
    <location>
        <begin position="156"/>
        <end position="165"/>
    </location>
</feature>
<feature type="helix" evidence="7">
    <location>
        <begin position="168"/>
        <end position="178"/>
    </location>
</feature>
<feature type="turn" evidence="7">
    <location>
        <begin position="181"/>
        <end position="183"/>
    </location>
</feature>
<feature type="helix" evidence="7">
    <location>
        <begin position="186"/>
        <end position="200"/>
    </location>
</feature>
<feature type="turn" evidence="7">
    <location>
        <begin position="208"/>
        <end position="210"/>
    </location>
</feature>
<feature type="strand" evidence="7">
    <location>
        <begin position="211"/>
        <end position="219"/>
    </location>
</feature>
<feature type="strand" evidence="7">
    <location>
        <begin position="222"/>
        <end position="227"/>
    </location>
</feature>
<feature type="helix" evidence="7">
    <location>
        <begin position="230"/>
        <end position="250"/>
    </location>
</feature>
<dbReference type="EMBL" id="BC102102">
    <property type="protein sequence ID" value="AAI02103.1"/>
    <property type="molecule type" value="mRNA"/>
</dbReference>
<dbReference type="RefSeq" id="NP_001029553.1">
    <property type="nucleotide sequence ID" value="NM_001034381.2"/>
</dbReference>
<dbReference type="PDB" id="1IRU">
    <property type="method" value="X-ray"/>
    <property type="resolution" value="2.75 A"/>
    <property type="chains" value="C/Q=1-261"/>
</dbReference>
<dbReference type="PDB" id="7DR6">
    <property type="method" value="EM"/>
    <property type="resolution" value="4.10 A"/>
    <property type="chains" value="N/g=1-261"/>
</dbReference>
<dbReference type="PDB" id="7DR7">
    <property type="method" value="EM"/>
    <property type="resolution" value="3.30 A"/>
    <property type="chains" value="G/N=1-261"/>
</dbReference>
<dbReference type="PDB" id="7DRW">
    <property type="method" value="EM"/>
    <property type="resolution" value="4.20 A"/>
    <property type="chains" value="C/j=1-261"/>
</dbReference>
<dbReference type="PDB" id="8AZK">
    <property type="method" value="EM"/>
    <property type="resolution" value="3.10 A"/>
    <property type="chains" value="C/Q=1-261"/>
</dbReference>
<dbReference type="PDB" id="8FZ5">
    <property type="method" value="EM"/>
    <property type="resolution" value="2.23 A"/>
    <property type="chains" value="C/Q=1-261"/>
</dbReference>
<dbReference type="PDB" id="8FZ6">
    <property type="method" value="EM"/>
    <property type="resolution" value="2.54 A"/>
    <property type="chains" value="C/Q=1-261"/>
</dbReference>
<dbReference type="PDBsum" id="1IRU"/>
<dbReference type="PDBsum" id="7DR6"/>
<dbReference type="PDBsum" id="7DR7"/>
<dbReference type="PDBsum" id="7DRW"/>
<dbReference type="PDBsum" id="8AZK"/>
<dbReference type="PDBsum" id="8FZ5"/>
<dbReference type="PDBsum" id="8FZ6"/>
<dbReference type="EMDB" id="EMD-15767"/>
<dbReference type="EMDB" id="EMD-29603"/>
<dbReference type="EMDB" id="EMD-29604"/>
<dbReference type="EMDB" id="EMD-30824"/>
<dbReference type="EMDB" id="EMD-30825"/>
<dbReference type="EMDB" id="EMD-30828"/>
<dbReference type="SMR" id="Q3ZCK9"/>
<dbReference type="FunCoup" id="Q3ZCK9">
    <property type="interactions" value="3472"/>
</dbReference>
<dbReference type="STRING" id="9913.ENSBTAP00000019203"/>
<dbReference type="MEROPS" id="T01.973"/>
<dbReference type="PaxDb" id="9913-ENSBTAP00000019203"/>
<dbReference type="Ensembl" id="ENSBTAT00000019203.3">
    <property type="protein sequence ID" value="ENSBTAP00000019203.2"/>
    <property type="gene ID" value="ENSBTAG00000014440.4"/>
</dbReference>
<dbReference type="GeneID" id="510423"/>
<dbReference type="KEGG" id="bta:510423"/>
<dbReference type="CTD" id="5685"/>
<dbReference type="VEuPathDB" id="HostDB:ENSBTAG00000014440"/>
<dbReference type="VGNC" id="VGNC:33439">
    <property type="gene designation" value="PSMA4"/>
</dbReference>
<dbReference type="eggNOG" id="KOG0178">
    <property type="taxonomic scope" value="Eukaryota"/>
</dbReference>
<dbReference type="GeneTree" id="ENSGT00550000074827"/>
<dbReference type="HOGENOM" id="CLU_035750_4_3_1"/>
<dbReference type="InParanoid" id="Q3ZCK9"/>
<dbReference type="OMA" id="YVLNDNM"/>
<dbReference type="OrthoDB" id="431557at2759"/>
<dbReference type="TreeFam" id="TF106209"/>
<dbReference type="Reactome" id="R-BTA-1169091">
    <property type="pathway name" value="Activation of NF-kappaB in B cells"/>
</dbReference>
<dbReference type="Reactome" id="R-BTA-1234176">
    <property type="pathway name" value="Oxygen-dependent proline hydroxylation of Hypoxia-inducible Factor Alpha"/>
</dbReference>
<dbReference type="Reactome" id="R-BTA-1236978">
    <property type="pathway name" value="Cross-presentation of soluble exogenous antigens (endosomes)"/>
</dbReference>
<dbReference type="Reactome" id="R-BTA-174084">
    <property type="pathway name" value="Autodegradation of Cdh1 by Cdh1:APC/C"/>
</dbReference>
<dbReference type="Reactome" id="R-BTA-174154">
    <property type="pathway name" value="APC/C:Cdc20 mediated degradation of Securin"/>
</dbReference>
<dbReference type="Reactome" id="R-BTA-174178">
    <property type="pathway name" value="APC/C:Cdh1 mediated degradation of Cdc20 and other APC/C:Cdh1 targeted proteins in late mitosis/early G1"/>
</dbReference>
<dbReference type="Reactome" id="R-BTA-174184">
    <property type="pathway name" value="Cdc20:Phospho-APC/C mediated degradation of Cyclin A"/>
</dbReference>
<dbReference type="Reactome" id="R-BTA-187577">
    <property type="pathway name" value="SCF(Skp2)-mediated degradation of p27/p21"/>
</dbReference>
<dbReference type="Reactome" id="R-BTA-195253">
    <property type="pathway name" value="Degradation of beta-catenin by the destruction complex"/>
</dbReference>
<dbReference type="Reactome" id="R-BTA-202424">
    <property type="pathway name" value="Downstream TCR signaling"/>
</dbReference>
<dbReference type="Reactome" id="R-BTA-2467813">
    <property type="pathway name" value="Separation of Sister Chromatids"/>
</dbReference>
<dbReference type="Reactome" id="R-BTA-2871837">
    <property type="pathway name" value="FCERI mediated NF-kB activation"/>
</dbReference>
<dbReference type="Reactome" id="R-BTA-349425">
    <property type="pathway name" value="Autodegradation of the E3 ubiquitin ligase COP1"/>
</dbReference>
<dbReference type="Reactome" id="R-BTA-350562">
    <property type="pathway name" value="Regulation of ornithine decarboxylase (ODC)"/>
</dbReference>
<dbReference type="Reactome" id="R-BTA-382556">
    <property type="pathway name" value="ABC-family proteins mediated transport"/>
</dbReference>
<dbReference type="Reactome" id="R-BTA-450408">
    <property type="pathway name" value="AUF1 (hnRNP D0) binds and destabilizes mRNA"/>
</dbReference>
<dbReference type="Reactome" id="R-BTA-4608870">
    <property type="pathway name" value="Asymmetric localization of PCP proteins"/>
</dbReference>
<dbReference type="Reactome" id="R-BTA-4641257">
    <property type="pathway name" value="Degradation of AXIN"/>
</dbReference>
<dbReference type="Reactome" id="R-BTA-4641258">
    <property type="pathway name" value="Degradation of DVL"/>
</dbReference>
<dbReference type="Reactome" id="R-BTA-5358346">
    <property type="pathway name" value="Hedgehog ligand biogenesis"/>
</dbReference>
<dbReference type="Reactome" id="R-BTA-5607761">
    <property type="pathway name" value="Dectin-1 mediated noncanonical NF-kB signaling"/>
</dbReference>
<dbReference type="Reactome" id="R-BTA-5607764">
    <property type="pathway name" value="CLEC7A (Dectin-1) signaling"/>
</dbReference>
<dbReference type="Reactome" id="R-BTA-5610780">
    <property type="pathway name" value="Degradation of GLI1 by the proteasome"/>
</dbReference>
<dbReference type="Reactome" id="R-BTA-5610785">
    <property type="pathway name" value="GLI3 is processed to GLI3R by the proteasome"/>
</dbReference>
<dbReference type="Reactome" id="R-BTA-5632684">
    <property type="pathway name" value="Hedgehog 'on' state"/>
</dbReference>
<dbReference type="Reactome" id="R-BTA-5668541">
    <property type="pathway name" value="TNFR2 non-canonical NF-kB pathway"/>
</dbReference>
<dbReference type="Reactome" id="R-BTA-5676590">
    <property type="pathway name" value="NIK--&gt;noncanonical NF-kB signaling"/>
</dbReference>
<dbReference type="Reactome" id="R-BTA-5687128">
    <property type="pathway name" value="MAPK6/MAPK4 signaling"/>
</dbReference>
<dbReference type="Reactome" id="R-BTA-5689603">
    <property type="pathway name" value="UCH proteinases"/>
</dbReference>
<dbReference type="Reactome" id="R-BTA-5689880">
    <property type="pathway name" value="Ub-specific processing proteases"/>
</dbReference>
<dbReference type="Reactome" id="R-BTA-68867">
    <property type="pathway name" value="Assembly of the pre-replicative complex"/>
</dbReference>
<dbReference type="Reactome" id="R-BTA-68949">
    <property type="pathway name" value="Orc1 removal from chromatin"/>
</dbReference>
<dbReference type="Reactome" id="R-BTA-69017">
    <property type="pathway name" value="CDK-mediated phosphorylation and removal of Cdc6"/>
</dbReference>
<dbReference type="Reactome" id="R-BTA-69481">
    <property type="pathway name" value="G2/M Checkpoints"/>
</dbReference>
<dbReference type="Reactome" id="R-BTA-69601">
    <property type="pathway name" value="Ubiquitin Mediated Degradation of Phosphorylated Cdc25A"/>
</dbReference>
<dbReference type="Reactome" id="R-BTA-75815">
    <property type="pathway name" value="Ubiquitin-dependent degradation of Cyclin D"/>
</dbReference>
<dbReference type="Reactome" id="R-BTA-8852276">
    <property type="pathway name" value="The role of GTSE1 in G2/M progression after G2 checkpoint"/>
</dbReference>
<dbReference type="Reactome" id="R-BTA-8854050">
    <property type="pathway name" value="FBXL7 down-regulates AURKA during mitotic entry and in early mitosis"/>
</dbReference>
<dbReference type="Reactome" id="R-BTA-8939236">
    <property type="pathway name" value="RUNX1 regulates transcription of genes involved in differentiation of HSCs"/>
</dbReference>
<dbReference type="Reactome" id="R-BTA-8939902">
    <property type="pathway name" value="Regulation of RUNX2 expression and activity"/>
</dbReference>
<dbReference type="Reactome" id="R-BTA-8941858">
    <property type="pathway name" value="Regulation of RUNX3 expression and activity"/>
</dbReference>
<dbReference type="Reactome" id="R-BTA-8948751">
    <property type="pathway name" value="Regulation of PTEN stability and activity"/>
</dbReference>
<dbReference type="Reactome" id="R-BTA-8951664">
    <property type="pathway name" value="Neddylation"/>
</dbReference>
<dbReference type="Reactome" id="R-BTA-9020702">
    <property type="pathway name" value="Interleukin-1 signaling"/>
</dbReference>
<dbReference type="Reactome" id="R-BTA-9755511">
    <property type="pathway name" value="KEAP1-NFE2L2 pathway"/>
</dbReference>
<dbReference type="Reactome" id="R-BTA-9762114">
    <property type="pathway name" value="GSK3B and BTRC:CUL1-mediated-degradation of NFE2L2"/>
</dbReference>
<dbReference type="Reactome" id="R-BTA-983168">
    <property type="pathway name" value="Antigen processing: Ubiquitination &amp; Proteasome degradation"/>
</dbReference>
<dbReference type="Reactome" id="R-BTA-9907900">
    <property type="pathway name" value="Proteasome assembly"/>
</dbReference>
<dbReference type="EvolutionaryTrace" id="Q3ZCK9"/>
<dbReference type="Proteomes" id="UP000009136">
    <property type="component" value="Chromosome 21"/>
</dbReference>
<dbReference type="Bgee" id="ENSBTAG00000014440">
    <property type="expression patterns" value="Expressed in oocyte and 106 other cell types or tissues"/>
</dbReference>
<dbReference type="GO" id="GO:0005829">
    <property type="term" value="C:cytosol"/>
    <property type="evidence" value="ECO:0000318"/>
    <property type="project" value="GO_Central"/>
</dbReference>
<dbReference type="GO" id="GO:0005634">
    <property type="term" value="C:nucleus"/>
    <property type="evidence" value="ECO:0000318"/>
    <property type="project" value="GO_Central"/>
</dbReference>
<dbReference type="GO" id="GO:0000932">
    <property type="term" value="C:P-body"/>
    <property type="evidence" value="ECO:0000250"/>
    <property type="project" value="UniProtKB"/>
</dbReference>
<dbReference type="GO" id="GO:0005839">
    <property type="term" value="C:proteasome core complex"/>
    <property type="evidence" value="ECO:0000250"/>
    <property type="project" value="UniProtKB"/>
</dbReference>
<dbReference type="GO" id="GO:0019773">
    <property type="term" value="C:proteasome core complex, alpha-subunit complex"/>
    <property type="evidence" value="ECO:0000250"/>
    <property type="project" value="UniProtKB"/>
</dbReference>
<dbReference type="GO" id="GO:0043161">
    <property type="term" value="P:proteasome-mediated ubiquitin-dependent protein catabolic process"/>
    <property type="evidence" value="ECO:0000318"/>
    <property type="project" value="GO_Central"/>
</dbReference>
<dbReference type="CDD" id="cd03752">
    <property type="entry name" value="proteasome_alpha_type_4"/>
    <property type="match status" value="1"/>
</dbReference>
<dbReference type="FunFam" id="3.60.20.10:FF:000022">
    <property type="entry name" value="Proteasome subunit alpha type"/>
    <property type="match status" value="1"/>
</dbReference>
<dbReference type="Gene3D" id="3.60.20.10">
    <property type="entry name" value="Glutamine Phosphoribosylpyrophosphate, subunit 1, domain 1"/>
    <property type="match status" value="1"/>
</dbReference>
<dbReference type="InterPro" id="IPR029055">
    <property type="entry name" value="Ntn_hydrolases_N"/>
</dbReference>
<dbReference type="InterPro" id="IPR050115">
    <property type="entry name" value="Proteasome_alpha"/>
</dbReference>
<dbReference type="InterPro" id="IPR023332">
    <property type="entry name" value="Proteasome_alpha-type"/>
</dbReference>
<dbReference type="InterPro" id="IPR000426">
    <property type="entry name" value="Proteasome_asu_N"/>
</dbReference>
<dbReference type="InterPro" id="IPR016050">
    <property type="entry name" value="Proteasome_bsu_CS"/>
</dbReference>
<dbReference type="InterPro" id="IPR001353">
    <property type="entry name" value="Proteasome_sua/b"/>
</dbReference>
<dbReference type="NCBIfam" id="NF003075">
    <property type="entry name" value="PRK03996.1"/>
    <property type="match status" value="1"/>
</dbReference>
<dbReference type="PANTHER" id="PTHR11599">
    <property type="entry name" value="PROTEASOME SUBUNIT ALPHA/BETA"/>
    <property type="match status" value="1"/>
</dbReference>
<dbReference type="Pfam" id="PF00227">
    <property type="entry name" value="Proteasome"/>
    <property type="match status" value="1"/>
</dbReference>
<dbReference type="Pfam" id="PF10584">
    <property type="entry name" value="Proteasome_A_N"/>
    <property type="match status" value="1"/>
</dbReference>
<dbReference type="SMART" id="SM00948">
    <property type="entry name" value="Proteasome_A_N"/>
    <property type="match status" value="1"/>
</dbReference>
<dbReference type="SUPFAM" id="SSF56235">
    <property type="entry name" value="N-terminal nucleophile aminohydrolases (Ntn hydrolases)"/>
    <property type="match status" value="1"/>
</dbReference>
<dbReference type="PROSITE" id="PS00388">
    <property type="entry name" value="PROTEASOME_ALPHA_1"/>
    <property type="match status" value="1"/>
</dbReference>
<dbReference type="PROSITE" id="PS51475">
    <property type="entry name" value="PROTEASOME_ALPHA_2"/>
    <property type="match status" value="1"/>
</dbReference>
<proteinExistence type="evidence at protein level"/>
<sequence>MSRRYDSRTTIFSPEGRLYQVEYAMEAIGHAGTCLGILANDGVLLAAERRNIHKLLDEVFFSEKIYKLNEDMACSVAGITSDANVLTNELRLIAQRYLLQYQEPIPCEQLVTALCDIKQAYTQFGGKRPFGVSLLYIGWDKHYGFQLYQSDPSGNYGGWKATCIGNNSAAAVSMLKQDYKEGEMTLKSALALAIKVLNKTMDVSKLSAEKVEIATLTRENGKTVIRVLKQKEVEQLIKKHEEEEAKAEREKKEKEQKEKDK</sequence>
<name>PSA4_BOVIN</name>
<accession>Q3ZCK9</accession>
<evidence type="ECO:0000250" key="1">
    <source>
        <dbReference type="UniProtKB" id="P25789"/>
    </source>
</evidence>
<evidence type="ECO:0000250" key="2">
    <source>
        <dbReference type="UniProtKB" id="Q9R1P0"/>
    </source>
</evidence>
<evidence type="ECO:0000255" key="3">
    <source>
        <dbReference type="PROSITE-ProRule" id="PRU00808"/>
    </source>
</evidence>
<evidence type="ECO:0000256" key="4">
    <source>
        <dbReference type="SAM" id="MobiDB-lite"/>
    </source>
</evidence>
<evidence type="ECO:0000269" key="5">
    <source>
    </source>
</evidence>
<evidence type="ECO:0007829" key="6">
    <source>
        <dbReference type="PDB" id="1IRU"/>
    </source>
</evidence>
<evidence type="ECO:0007829" key="7">
    <source>
        <dbReference type="PDB" id="8FZ5"/>
    </source>
</evidence>